<feature type="chain" id="PRO_1000064983" description="UPF0208 membrane protein SG1605">
    <location>
        <begin position="1"/>
        <end position="151"/>
    </location>
</feature>
<feature type="transmembrane region" description="Helical" evidence="1">
    <location>
        <begin position="46"/>
        <end position="64"/>
    </location>
</feature>
<feature type="transmembrane region" description="Helical" evidence="1">
    <location>
        <begin position="70"/>
        <end position="90"/>
    </location>
</feature>
<protein>
    <recommendedName>
        <fullName evidence="1">UPF0208 membrane protein SG1605</fullName>
    </recommendedName>
</protein>
<name>Y1605_SODGM</name>
<keyword id="KW-0997">Cell inner membrane</keyword>
<keyword id="KW-1003">Cell membrane</keyword>
<keyword id="KW-0472">Membrane</keyword>
<keyword id="KW-0812">Transmembrane</keyword>
<keyword id="KW-1133">Transmembrane helix</keyword>
<reference key="1">
    <citation type="journal article" date="2006" name="Genome Res.">
        <title>Massive genome erosion and functional adaptations provide insights into the symbiotic lifestyle of Sodalis glossinidius in the tsetse host.</title>
        <authorList>
            <person name="Toh H."/>
            <person name="Weiss B.L."/>
            <person name="Perkin S.A.H."/>
            <person name="Yamashita A."/>
            <person name="Oshima K."/>
            <person name="Hattori M."/>
            <person name="Aksoy S."/>
        </authorList>
    </citation>
    <scope>NUCLEOTIDE SEQUENCE [LARGE SCALE GENOMIC DNA]</scope>
    <source>
        <strain>morsitans</strain>
    </source>
</reference>
<comment type="subcellular location">
    <subcellularLocation>
        <location evidence="1">Cell inner membrane</location>
        <topology evidence="1">Multi-pass membrane protein</topology>
    </subcellularLocation>
</comment>
<comment type="similarity">
    <text evidence="1">Belongs to the UPF0208 family.</text>
</comment>
<sequence>MSTLPSGSVSWYKIFQRGQNYMKAWPAEKSLAPMFPEHRVVRATRFGVRFMPAVAVFTLTWQIALGGQLGPAVATAIFACSLPMQGLWWLGKRSITPLPPSLLTCFHEVRQKLNEAGQSLAPVEGVPTYQMLVEVLKRAFKLLDKAFLDDL</sequence>
<evidence type="ECO:0000255" key="1">
    <source>
        <dbReference type="HAMAP-Rule" id="MF_01101"/>
    </source>
</evidence>
<organism>
    <name type="scientific">Sodalis glossinidius (strain morsitans)</name>
    <dbReference type="NCBI Taxonomy" id="343509"/>
    <lineage>
        <taxon>Bacteria</taxon>
        <taxon>Pseudomonadati</taxon>
        <taxon>Pseudomonadota</taxon>
        <taxon>Gammaproteobacteria</taxon>
        <taxon>Enterobacterales</taxon>
        <taxon>Bruguierivoracaceae</taxon>
        <taxon>Sodalis</taxon>
    </lineage>
</organism>
<gene>
    <name type="ordered locus">SG1605</name>
</gene>
<dbReference type="EMBL" id="AP008232">
    <property type="protein sequence ID" value="BAE74880.1"/>
    <property type="molecule type" value="Genomic_DNA"/>
</dbReference>
<dbReference type="RefSeq" id="WP_011411433.1">
    <property type="nucleotide sequence ID" value="NC_007712.1"/>
</dbReference>
<dbReference type="STRING" id="343509.SG1605"/>
<dbReference type="KEGG" id="sgl:SG1605"/>
<dbReference type="eggNOG" id="COG3092">
    <property type="taxonomic scope" value="Bacteria"/>
</dbReference>
<dbReference type="HOGENOM" id="CLU_128746_0_0_6"/>
<dbReference type="OrthoDB" id="7066670at2"/>
<dbReference type="BioCyc" id="SGLO343509:SGP1_RS14590-MONOMER"/>
<dbReference type="Proteomes" id="UP000001932">
    <property type="component" value="Chromosome"/>
</dbReference>
<dbReference type="GO" id="GO:0005886">
    <property type="term" value="C:plasma membrane"/>
    <property type="evidence" value="ECO:0007669"/>
    <property type="project" value="UniProtKB-SubCell"/>
</dbReference>
<dbReference type="HAMAP" id="MF_01101">
    <property type="entry name" value="UPF0208"/>
    <property type="match status" value="1"/>
</dbReference>
<dbReference type="InterPro" id="IPR007334">
    <property type="entry name" value="UPF0208"/>
</dbReference>
<dbReference type="NCBIfam" id="NF002493">
    <property type="entry name" value="PRK01816.1"/>
    <property type="match status" value="1"/>
</dbReference>
<dbReference type="Pfam" id="PF04217">
    <property type="entry name" value="DUF412"/>
    <property type="match status" value="1"/>
</dbReference>
<proteinExistence type="inferred from homology"/>
<accession>Q2NSJ5</accession>